<accession>B7MAL4</accession>
<feature type="chain" id="PRO_1000116621" description="UDP-N-acetylmuramate--L-alanine ligase">
    <location>
        <begin position="1"/>
        <end position="491"/>
    </location>
</feature>
<feature type="binding site" evidence="1">
    <location>
        <begin position="126"/>
        <end position="132"/>
    </location>
    <ligand>
        <name>ATP</name>
        <dbReference type="ChEBI" id="CHEBI:30616"/>
    </ligand>
</feature>
<evidence type="ECO:0000255" key="1">
    <source>
        <dbReference type="HAMAP-Rule" id="MF_00046"/>
    </source>
</evidence>
<sequence>MNTQQLAKLRSIVPEMRRVRHIHFVGIGGAGMGGIAEVLANEGYQISGSDLAPNPVTQQLMNLGATIYFNHRPENVRDASVVVVSSAISADNPEIVAAHEARIPVIRRAEMLAELMRFRHGIAIAGTHGKTTTTAMVSSIYAEAGLDPTFVNGGLVKAAGVHARLGHGRYLIAEADESDASFLHLQPMVAIVTNIEADHMDTYQGDFENLKQTFINFLHNLPFYGRAVMCVDDPVIRELLPRVGRQTTTYGFSEDADVRVEDYQQIGPQGHFTLLRQDKEPMRVTLNAPGRHNALNAAAAVAVATEEGIDDEAILRALESFQGTGRRFDFLGEFPLEPVNGKSGTAMLVDDYGHHPTEVDATIKAARAGWPDKNLVMLFQPHRFTRTRDLYDDFANVLTQVDTLLMLEVYPAGEAPIPGADSRSLCRTIRGRGKIDPILVPDPAQVAEMLAPVLTGNDLILVQGAGNIGKIARSLAEIKLKPQTPEEEQHD</sequence>
<gene>
    <name evidence="1" type="primary">murC</name>
    <name type="ordered locus">ECS88_0094</name>
</gene>
<protein>
    <recommendedName>
        <fullName evidence="1">UDP-N-acetylmuramate--L-alanine ligase</fullName>
        <ecNumber evidence="1">6.3.2.8</ecNumber>
    </recommendedName>
    <alternativeName>
        <fullName evidence="1">UDP-N-acetylmuramoyl-L-alanine synthetase</fullName>
    </alternativeName>
</protein>
<name>MURC_ECO45</name>
<organism>
    <name type="scientific">Escherichia coli O45:K1 (strain S88 / ExPEC)</name>
    <dbReference type="NCBI Taxonomy" id="585035"/>
    <lineage>
        <taxon>Bacteria</taxon>
        <taxon>Pseudomonadati</taxon>
        <taxon>Pseudomonadota</taxon>
        <taxon>Gammaproteobacteria</taxon>
        <taxon>Enterobacterales</taxon>
        <taxon>Enterobacteriaceae</taxon>
        <taxon>Escherichia</taxon>
    </lineage>
</organism>
<proteinExistence type="inferred from homology"/>
<reference key="1">
    <citation type="journal article" date="2009" name="PLoS Genet.">
        <title>Organised genome dynamics in the Escherichia coli species results in highly diverse adaptive paths.</title>
        <authorList>
            <person name="Touchon M."/>
            <person name="Hoede C."/>
            <person name="Tenaillon O."/>
            <person name="Barbe V."/>
            <person name="Baeriswyl S."/>
            <person name="Bidet P."/>
            <person name="Bingen E."/>
            <person name="Bonacorsi S."/>
            <person name="Bouchier C."/>
            <person name="Bouvet O."/>
            <person name="Calteau A."/>
            <person name="Chiapello H."/>
            <person name="Clermont O."/>
            <person name="Cruveiller S."/>
            <person name="Danchin A."/>
            <person name="Diard M."/>
            <person name="Dossat C."/>
            <person name="Karoui M.E."/>
            <person name="Frapy E."/>
            <person name="Garry L."/>
            <person name="Ghigo J.M."/>
            <person name="Gilles A.M."/>
            <person name="Johnson J."/>
            <person name="Le Bouguenec C."/>
            <person name="Lescat M."/>
            <person name="Mangenot S."/>
            <person name="Martinez-Jehanne V."/>
            <person name="Matic I."/>
            <person name="Nassif X."/>
            <person name="Oztas S."/>
            <person name="Petit M.A."/>
            <person name="Pichon C."/>
            <person name="Rouy Z."/>
            <person name="Ruf C.S."/>
            <person name="Schneider D."/>
            <person name="Tourret J."/>
            <person name="Vacherie B."/>
            <person name="Vallenet D."/>
            <person name="Medigue C."/>
            <person name="Rocha E.P.C."/>
            <person name="Denamur E."/>
        </authorList>
    </citation>
    <scope>NUCLEOTIDE SEQUENCE [LARGE SCALE GENOMIC DNA]</scope>
    <source>
        <strain>S88 / ExPEC</strain>
    </source>
</reference>
<dbReference type="EC" id="6.3.2.8" evidence="1"/>
<dbReference type="EMBL" id="CU928161">
    <property type="protein sequence ID" value="CAR01460.1"/>
    <property type="molecule type" value="Genomic_DNA"/>
</dbReference>
<dbReference type="RefSeq" id="WP_001096048.1">
    <property type="nucleotide sequence ID" value="NC_011742.1"/>
</dbReference>
<dbReference type="SMR" id="B7MAL4"/>
<dbReference type="GeneID" id="75169991"/>
<dbReference type="KEGG" id="ecz:ECS88_0094"/>
<dbReference type="HOGENOM" id="CLU_028104_2_2_6"/>
<dbReference type="UniPathway" id="UPA00219"/>
<dbReference type="Proteomes" id="UP000000747">
    <property type="component" value="Chromosome"/>
</dbReference>
<dbReference type="GO" id="GO:0005737">
    <property type="term" value="C:cytoplasm"/>
    <property type="evidence" value="ECO:0007669"/>
    <property type="project" value="UniProtKB-SubCell"/>
</dbReference>
<dbReference type="GO" id="GO:0005524">
    <property type="term" value="F:ATP binding"/>
    <property type="evidence" value="ECO:0007669"/>
    <property type="project" value="UniProtKB-UniRule"/>
</dbReference>
<dbReference type="GO" id="GO:0008763">
    <property type="term" value="F:UDP-N-acetylmuramate-L-alanine ligase activity"/>
    <property type="evidence" value="ECO:0007669"/>
    <property type="project" value="UniProtKB-UniRule"/>
</dbReference>
<dbReference type="GO" id="GO:0051301">
    <property type="term" value="P:cell division"/>
    <property type="evidence" value="ECO:0007669"/>
    <property type="project" value="UniProtKB-KW"/>
</dbReference>
<dbReference type="GO" id="GO:0071555">
    <property type="term" value="P:cell wall organization"/>
    <property type="evidence" value="ECO:0007669"/>
    <property type="project" value="UniProtKB-KW"/>
</dbReference>
<dbReference type="GO" id="GO:0009252">
    <property type="term" value="P:peptidoglycan biosynthetic process"/>
    <property type="evidence" value="ECO:0007669"/>
    <property type="project" value="UniProtKB-UniRule"/>
</dbReference>
<dbReference type="GO" id="GO:0008360">
    <property type="term" value="P:regulation of cell shape"/>
    <property type="evidence" value="ECO:0007669"/>
    <property type="project" value="UniProtKB-KW"/>
</dbReference>
<dbReference type="FunFam" id="3.40.1190.10:FF:000001">
    <property type="entry name" value="UDP-N-acetylmuramate--L-alanine ligase"/>
    <property type="match status" value="1"/>
</dbReference>
<dbReference type="FunFam" id="3.40.50.720:FF:000046">
    <property type="entry name" value="UDP-N-acetylmuramate--L-alanine ligase"/>
    <property type="match status" value="1"/>
</dbReference>
<dbReference type="FunFam" id="3.90.190.20:FF:000001">
    <property type="entry name" value="UDP-N-acetylmuramate--L-alanine ligase"/>
    <property type="match status" value="1"/>
</dbReference>
<dbReference type="Gene3D" id="3.90.190.20">
    <property type="entry name" value="Mur ligase, C-terminal domain"/>
    <property type="match status" value="1"/>
</dbReference>
<dbReference type="Gene3D" id="3.40.1190.10">
    <property type="entry name" value="Mur-like, catalytic domain"/>
    <property type="match status" value="1"/>
</dbReference>
<dbReference type="Gene3D" id="3.40.50.720">
    <property type="entry name" value="NAD(P)-binding Rossmann-like Domain"/>
    <property type="match status" value="1"/>
</dbReference>
<dbReference type="HAMAP" id="MF_00046">
    <property type="entry name" value="MurC"/>
    <property type="match status" value="1"/>
</dbReference>
<dbReference type="InterPro" id="IPR036565">
    <property type="entry name" value="Mur-like_cat_sf"/>
</dbReference>
<dbReference type="InterPro" id="IPR004101">
    <property type="entry name" value="Mur_ligase_C"/>
</dbReference>
<dbReference type="InterPro" id="IPR036615">
    <property type="entry name" value="Mur_ligase_C_dom_sf"/>
</dbReference>
<dbReference type="InterPro" id="IPR013221">
    <property type="entry name" value="Mur_ligase_cen"/>
</dbReference>
<dbReference type="InterPro" id="IPR000713">
    <property type="entry name" value="Mur_ligase_N"/>
</dbReference>
<dbReference type="InterPro" id="IPR050061">
    <property type="entry name" value="MurCDEF_pg_biosynth"/>
</dbReference>
<dbReference type="InterPro" id="IPR005758">
    <property type="entry name" value="UDP-N-AcMur_Ala_ligase_MurC"/>
</dbReference>
<dbReference type="NCBIfam" id="TIGR01082">
    <property type="entry name" value="murC"/>
    <property type="match status" value="1"/>
</dbReference>
<dbReference type="PANTHER" id="PTHR43445:SF3">
    <property type="entry name" value="UDP-N-ACETYLMURAMATE--L-ALANINE LIGASE"/>
    <property type="match status" value="1"/>
</dbReference>
<dbReference type="PANTHER" id="PTHR43445">
    <property type="entry name" value="UDP-N-ACETYLMURAMATE--L-ALANINE LIGASE-RELATED"/>
    <property type="match status" value="1"/>
</dbReference>
<dbReference type="Pfam" id="PF01225">
    <property type="entry name" value="Mur_ligase"/>
    <property type="match status" value="1"/>
</dbReference>
<dbReference type="Pfam" id="PF02875">
    <property type="entry name" value="Mur_ligase_C"/>
    <property type="match status" value="1"/>
</dbReference>
<dbReference type="Pfam" id="PF08245">
    <property type="entry name" value="Mur_ligase_M"/>
    <property type="match status" value="1"/>
</dbReference>
<dbReference type="SUPFAM" id="SSF51984">
    <property type="entry name" value="MurCD N-terminal domain"/>
    <property type="match status" value="1"/>
</dbReference>
<dbReference type="SUPFAM" id="SSF53623">
    <property type="entry name" value="MurD-like peptide ligases, catalytic domain"/>
    <property type="match status" value="1"/>
</dbReference>
<dbReference type="SUPFAM" id="SSF53244">
    <property type="entry name" value="MurD-like peptide ligases, peptide-binding domain"/>
    <property type="match status" value="1"/>
</dbReference>
<comment type="function">
    <text evidence="1">Cell wall formation.</text>
</comment>
<comment type="catalytic activity">
    <reaction evidence="1">
        <text>UDP-N-acetyl-alpha-D-muramate + L-alanine + ATP = UDP-N-acetyl-alpha-D-muramoyl-L-alanine + ADP + phosphate + H(+)</text>
        <dbReference type="Rhea" id="RHEA:23372"/>
        <dbReference type="ChEBI" id="CHEBI:15378"/>
        <dbReference type="ChEBI" id="CHEBI:30616"/>
        <dbReference type="ChEBI" id="CHEBI:43474"/>
        <dbReference type="ChEBI" id="CHEBI:57972"/>
        <dbReference type="ChEBI" id="CHEBI:70757"/>
        <dbReference type="ChEBI" id="CHEBI:83898"/>
        <dbReference type="ChEBI" id="CHEBI:456216"/>
        <dbReference type="EC" id="6.3.2.8"/>
    </reaction>
</comment>
<comment type="pathway">
    <text evidence="1">Cell wall biogenesis; peptidoglycan biosynthesis.</text>
</comment>
<comment type="subcellular location">
    <subcellularLocation>
        <location evidence="1">Cytoplasm</location>
    </subcellularLocation>
</comment>
<comment type="similarity">
    <text evidence="1">Belongs to the MurCDEF family.</text>
</comment>
<keyword id="KW-0067">ATP-binding</keyword>
<keyword id="KW-0131">Cell cycle</keyword>
<keyword id="KW-0132">Cell division</keyword>
<keyword id="KW-0133">Cell shape</keyword>
<keyword id="KW-0961">Cell wall biogenesis/degradation</keyword>
<keyword id="KW-0963">Cytoplasm</keyword>
<keyword id="KW-0436">Ligase</keyword>
<keyword id="KW-0547">Nucleotide-binding</keyword>
<keyword id="KW-0573">Peptidoglycan synthesis</keyword>
<keyword id="KW-1185">Reference proteome</keyword>